<proteinExistence type="evidence at transcript level"/>
<protein>
    <recommendedName>
        <fullName>Calcium-binding protein SPEC 2D</fullName>
    </recommendedName>
</protein>
<comment type="function">
    <text>Calcium-binding protein involved in larval development and metamorphosis. Likely to function as calcium buffers mediating the transport of calcium from the sea water to the blastocoel where calcium is required for skeleton formation.</text>
</comment>
<comment type="tissue specificity">
    <text>Found in cell lineages giving rise to the aboral ectoderm, a squamous epithelium covering the surface of the late stage embryo and larva.</text>
</comment>
<comment type="developmental stage">
    <text>Accumulate in embryos and larvae, but not in adults.</text>
</comment>
<gene>
    <name type="primary">SPEC2D</name>
</gene>
<organism>
    <name type="scientific">Strongylocentrotus purpuratus</name>
    <name type="common">Purple sea urchin</name>
    <dbReference type="NCBI Taxonomy" id="7668"/>
    <lineage>
        <taxon>Eukaryota</taxon>
        <taxon>Metazoa</taxon>
        <taxon>Echinodermata</taxon>
        <taxon>Eleutherozoa</taxon>
        <taxon>Echinozoa</taxon>
        <taxon>Echinoidea</taxon>
        <taxon>Euechinoidea</taxon>
        <taxon>Echinacea</taxon>
        <taxon>Camarodonta</taxon>
        <taxon>Echinidea</taxon>
        <taxon>Strongylocentrotidae</taxon>
        <taxon>Strongylocentrotus</taxon>
    </lineage>
</organism>
<dbReference type="EMBL" id="M32447">
    <property type="protein sequence ID" value="AAA30074.1"/>
    <property type="molecule type" value="mRNA"/>
</dbReference>
<dbReference type="EMBL" id="X12773">
    <property type="protein sequence ID" value="CAA31261.2"/>
    <property type="molecule type" value="Genomic_DNA"/>
</dbReference>
<dbReference type="EMBL" id="X14539">
    <property type="protein sequence ID" value="CAA31261.2"/>
    <property type="status" value="JOINED"/>
    <property type="molecule type" value="Genomic_DNA"/>
</dbReference>
<dbReference type="EMBL" id="X14540">
    <property type="protein sequence ID" value="CAA31261.2"/>
    <property type="status" value="JOINED"/>
    <property type="molecule type" value="Genomic_DNA"/>
</dbReference>
<dbReference type="EMBL" id="X14541">
    <property type="protein sequence ID" value="CAA31261.2"/>
    <property type="status" value="JOINED"/>
    <property type="molecule type" value="Genomic_DNA"/>
</dbReference>
<dbReference type="EMBL" id="X14542">
    <property type="protein sequence ID" value="CAA31261.2"/>
    <property type="status" value="JOINED"/>
    <property type="molecule type" value="Genomic_DNA"/>
</dbReference>
<dbReference type="EMBL" id="X14543">
    <property type="protein sequence ID" value="CAA31261.2"/>
    <property type="status" value="JOINED"/>
    <property type="molecule type" value="Genomic_DNA"/>
</dbReference>
<dbReference type="PIR" id="S01772">
    <property type="entry name" value="S01772"/>
</dbReference>
<dbReference type="SMR" id="P15844"/>
<dbReference type="STRING" id="7668.P15844"/>
<dbReference type="eggNOG" id="KOG0027">
    <property type="taxonomic scope" value="Eukaryota"/>
</dbReference>
<dbReference type="HOGENOM" id="CLU_438277_0_0_1"/>
<dbReference type="InParanoid" id="P15844"/>
<dbReference type="Proteomes" id="UP000007110">
    <property type="component" value="Unassembled WGS sequence"/>
</dbReference>
<dbReference type="GO" id="GO:0005737">
    <property type="term" value="C:cytoplasm"/>
    <property type="evidence" value="ECO:0000318"/>
    <property type="project" value="GO_Central"/>
</dbReference>
<dbReference type="GO" id="GO:0005509">
    <property type="term" value="F:calcium ion binding"/>
    <property type="evidence" value="ECO:0000318"/>
    <property type="project" value="GO_Central"/>
</dbReference>
<dbReference type="GO" id="GO:0030234">
    <property type="term" value="F:enzyme regulator activity"/>
    <property type="evidence" value="ECO:0000318"/>
    <property type="project" value="GO_Central"/>
</dbReference>
<dbReference type="GO" id="GO:0000226">
    <property type="term" value="P:microtubule cytoskeleton organization"/>
    <property type="evidence" value="ECO:0000318"/>
    <property type="project" value="GO_Central"/>
</dbReference>
<dbReference type="CDD" id="cd00051">
    <property type="entry name" value="EFh"/>
    <property type="match status" value="1"/>
</dbReference>
<dbReference type="FunFam" id="1.10.238.10:FF:000402">
    <property type="entry name" value="Calcium-binding protein SPEC 2D"/>
    <property type="match status" value="1"/>
</dbReference>
<dbReference type="Gene3D" id="1.10.238.10">
    <property type="entry name" value="EF-hand"/>
    <property type="match status" value="2"/>
</dbReference>
<dbReference type="InterPro" id="IPR050145">
    <property type="entry name" value="Centrin_CML-like"/>
</dbReference>
<dbReference type="InterPro" id="IPR011992">
    <property type="entry name" value="EF-hand-dom_pair"/>
</dbReference>
<dbReference type="InterPro" id="IPR002048">
    <property type="entry name" value="EF_hand_dom"/>
</dbReference>
<dbReference type="PANTHER" id="PTHR23050">
    <property type="entry name" value="CALCIUM BINDING PROTEIN"/>
    <property type="match status" value="1"/>
</dbReference>
<dbReference type="Pfam" id="PF13499">
    <property type="entry name" value="EF-hand_7"/>
    <property type="match status" value="1"/>
</dbReference>
<dbReference type="SMART" id="SM00054">
    <property type="entry name" value="EFh"/>
    <property type="match status" value="3"/>
</dbReference>
<dbReference type="SUPFAM" id="SSF47473">
    <property type="entry name" value="EF-hand"/>
    <property type="match status" value="1"/>
</dbReference>
<dbReference type="PROSITE" id="PS50222">
    <property type="entry name" value="EF_HAND_2"/>
    <property type="match status" value="3"/>
</dbReference>
<name>SPE2D_STRPU</name>
<evidence type="ECO:0000255" key="1">
    <source>
        <dbReference type="PROSITE-ProRule" id="PRU00448"/>
    </source>
</evidence>
<evidence type="ECO:0000305" key="2"/>
<reference key="1">
    <citation type="journal article" date="1987" name="J. Mol. Evol.">
        <title>Unusual sequence conservation in the 5' and 3' untranslated regions of the sea urchin spec mRNAs.</title>
        <authorList>
            <person name="Hardin P.E."/>
            <person name="Klein W.H."/>
        </authorList>
    </citation>
    <scope>NUCLEOTIDE SEQUENCE [MRNA]</scope>
    <source>
        <tissue>Embryo</tissue>
    </source>
</reference>
<reference key="2">
    <citation type="journal article" date="1988" name="J. Mol. Biol.">
        <title>Spec2 genes of Strongylocentrotus purpuratus. Structure and differential expression in embryonic aboral ectoderm cells.</title>
        <authorList>
            <person name="Hardin P.E."/>
            <person name="Angerer L.M."/>
            <person name="Hardin S.H."/>
            <person name="Angerer R.C."/>
            <person name="Klein W.H."/>
        </authorList>
    </citation>
    <scope>NUCLEOTIDE SEQUENCE [GENOMIC DNA]</scope>
</reference>
<feature type="chain" id="PRO_0000073642" description="Calcium-binding protein SPEC 2D">
    <location>
        <begin position="1"/>
        <end position="141"/>
    </location>
</feature>
<feature type="domain" description="EF-hand 1" evidence="1">
    <location>
        <begin position="10"/>
        <end position="42"/>
    </location>
</feature>
<feature type="domain" description="EF-hand 2" evidence="2">
    <location>
        <begin position="43"/>
        <end position="72"/>
    </location>
</feature>
<feature type="domain" description="EF-hand 3" evidence="1">
    <location>
        <begin position="73"/>
        <end position="107"/>
    </location>
</feature>
<feature type="domain" description="EF-hand 4" evidence="1">
    <location>
        <begin position="108"/>
        <end position="141"/>
    </location>
</feature>
<feature type="binding site" evidence="2">
    <location>
        <position position="23"/>
    </location>
    <ligand>
        <name>Ca(2+)</name>
        <dbReference type="ChEBI" id="CHEBI:29108"/>
        <label>1</label>
    </ligand>
</feature>
<feature type="binding site" evidence="2">
    <location>
        <position position="25"/>
    </location>
    <ligand>
        <name>Ca(2+)</name>
        <dbReference type="ChEBI" id="CHEBI:29108"/>
        <label>1</label>
    </ligand>
</feature>
<feature type="binding site" evidence="2">
    <location>
        <position position="27"/>
    </location>
    <ligand>
        <name>Ca(2+)</name>
        <dbReference type="ChEBI" id="CHEBI:29108"/>
        <label>1</label>
    </ligand>
</feature>
<feature type="binding site" evidence="2">
    <location>
        <position position="29"/>
    </location>
    <ligand>
        <name>Ca(2+)</name>
        <dbReference type="ChEBI" id="CHEBI:29108"/>
        <label>1</label>
    </ligand>
</feature>
<feature type="binding site" evidence="2">
    <location>
        <position position="84"/>
    </location>
    <ligand>
        <name>Ca(2+)</name>
        <dbReference type="ChEBI" id="CHEBI:29108"/>
        <label>2</label>
    </ligand>
</feature>
<feature type="binding site" evidence="2">
    <location>
        <position position="86"/>
    </location>
    <ligand>
        <name>Ca(2+)</name>
        <dbReference type="ChEBI" id="CHEBI:29108"/>
        <label>2</label>
    </ligand>
</feature>
<feature type="binding site" evidence="2">
    <location>
        <position position="90"/>
    </location>
    <ligand>
        <name>Ca(2+)</name>
        <dbReference type="ChEBI" id="CHEBI:29108"/>
        <label>2</label>
    </ligand>
</feature>
<feature type="binding site" evidence="2">
    <location>
        <position position="95"/>
    </location>
    <ligand>
        <name>Ca(2+)</name>
        <dbReference type="ChEBI" id="CHEBI:29108"/>
        <label>2</label>
    </ligand>
</feature>
<feature type="binding site" evidence="2">
    <location>
        <position position="121"/>
    </location>
    <ligand>
        <name>Ca(2+)</name>
        <dbReference type="ChEBI" id="CHEBI:29108"/>
        <label>3</label>
    </ligand>
</feature>
<feature type="binding site" evidence="2">
    <location>
        <position position="125"/>
    </location>
    <ligand>
        <name>Ca(2+)</name>
        <dbReference type="ChEBI" id="CHEBI:29108"/>
        <label>3</label>
    </ligand>
</feature>
<feature type="binding site" evidence="2">
    <location>
        <position position="127"/>
    </location>
    <ligand>
        <name>Ca(2+)</name>
        <dbReference type="ChEBI" id="CHEBI:29108"/>
        <label>3</label>
    </ligand>
</feature>
<feature type="binding site" evidence="2">
    <location>
        <position position="132"/>
    </location>
    <ligand>
        <name>Ca(2+)</name>
        <dbReference type="ChEBI" id="CHEBI:29108"/>
        <label>3</label>
    </ligand>
</feature>
<feature type="sequence conflict" description="In Ref. 1; AAA30074." evidence="2" ref="1">
    <original>N</original>
    <variation>S</variation>
    <location>
        <position position="26"/>
    </location>
</feature>
<feature type="sequence conflict" description="In Ref. 1; AAA30074." evidence="2" ref="1">
    <original>V</original>
    <variation>D</variation>
    <location>
        <position position="57"/>
    </location>
</feature>
<feature type="sequence conflict" description="In Ref. 1; AAA30074." evidence="2" ref="1">
    <original>Q</original>
    <variation>E</variation>
    <location>
        <position position="66"/>
    </location>
</feature>
<feature type="sequence conflict" description="In Ref. 1; AAA30074." evidence="2" ref="1">
    <original>M</original>
    <variation>V</variation>
    <location>
        <position position="101"/>
    </location>
</feature>
<feature type="sequence conflict" description="In Ref. 1; AAA30074." evidence="2" ref="1">
    <original>P</original>
    <variation>T</variation>
    <location>
        <position position="123"/>
    </location>
</feature>
<sequence length="141" mass="16268">MAANLLFSEDQIKEYKTKFDAFDRNNDGNFPTMFLGNAMKSVGHVLTAAELENSRRVRKGTTTFPQFLAMILDKKCRKVFKAMDKDDKDKLLSADEVRQAMLSFDRQITEDKIKEMIEKADFPNDGKCSLEEFVKMVMNFC</sequence>
<accession>P15844</accession>
<keyword id="KW-0106">Calcium</keyword>
<keyword id="KW-0479">Metal-binding</keyword>
<keyword id="KW-1185">Reference proteome</keyword>
<keyword id="KW-0677">Repeat</keyword>